<name>NF2L3_MOUSE</name>
<gene>
    <name type="primary">Nfe2l3</name>
    <name type="synonym">Nrf3</name>
</gene>
<proteinExistence type="evidence at protein level"/>
<organism>
    <name type="scientific">Mus musculus</name>
    <name type="common">Mouse</name>
    <dbReference type="NCBI Taxonomy" id="10090"/>
    <lineage>
        <taxon>Eukaryota</taxon>
        <taxon>Metazoa</taxon>
        <taxon>Chordata</taxon>
        <taxon>Craniata</taxon>
        <taxon>Vertebrata</taxon>
        <taxon>Euteleostomi</taxon>
        <taxon>Mammalia</taxon>
        <taxon>Eutheria</taxon>
        <taxon>Euarchontoglires</taxon>
        <taxon>Glires</taxon>
        <taxon>Rodentia</taxon>
        <taxon>Myomorpha</taxon>
        <taxon>Muroidea</taxon>
        <taxon>Muridae</taxon>
        <taxon>Murinae</taxon>
        <taxon>Mus</taxon>
        <taxon>Mus</taxon>
    </lineage>
</organism>
<comment type="function">
    <text>Activates erythroid-specific, globin gene expression.</text>
</comment>
<comment type="subunit">
    <text evidence="1">Heterodimer with MAFG, MAFK and other small MAF proteins that binds to the MAF recognition elements (MARE).</text>
</comment>
<comment type="subcellular location">
    <subcellularLocation>
        <location evidence="2">Nucleus</location>
    </subcellularLocation>
</comment>
<comment type="tissue specificity">
    <text evidence="4">High level expression in brain, thymus, testis and placenta. Medium level expression in uterus, stomach and lung. Low level expression in kidney. No expression in heart, liver, spleen and ovary.</text>
</comment>
<comment type="similarity">
    <text evidence="5">Belongs to the bZIP family. CNC subfamily.</text>
</comment>
<keyword id="KW-0010">Activator</keyword>
<keyword id="KW-0238">DNA-binding</keyword>
<keyword id="KW-0539">Nucleus</keyword>
<keyword id="KW-1185">Reference proteome</keyword>
<keyword id="KW-0804">Transcription</keyword>
<keyword id="KW-0805">Transcription regulation</keyword>
<sequence length="660" mass="72707">MKLPKPWWAGGGLLQLTILLSLVGLRVDLDLFLPPPAAALWEELLPLCPTRPASASNPFSASEGWERTPLLPAKGRLLHEVRALGVPFIPRTRVDAWLVHSVATGNADGAHGLLGTAASSAVGDGGQSASAGGGDPRAAHSSPLAAEEEEEKAAEPTAQVPDAGGCGSQENGMLREKSEAVDHSSQQEENEEGVSAQAKSRQQSKTEEHKMACASAREAEKITEARNESHLHWSDTSFSLEDLFQLLSSQPEHSLEGISVEDIPPFLSSVCESVNSSAQNINLSQAISHDVNLHEAMLLYPNNTFRRDPSARSSQAQEPFLQLNPHTNPEQATPAMSLPPFDNQMRNLTSQDLLYDLDSNIFDGINLMSLATGFSPLEVSQLFEEPDSGLSLNSSYNSTSLTNSYRIYDGTVGYNSDLQSLCHDLGAVGGCYPEPHKHCHMDHRTIAGFHVSLECQQVFHDHTYHLQSGASEPTSESFAWSEKSQKTSGCLDNPDRNLSRDEQRAKALHIPFSVDEIVRMPVDSFNSMLSRYYLTDLQVSLIRDIRRRGKNKVAAQNCRKRKLDIILNLEDDICNLQAKKEALKNEQTQCSKAIDIMRQKLHGLHQDVFNRLRDDQGRPVNPSQYALQYSHDGTVLIVPKELISSGHKKEAPKGKRERRN</sequence>
<feature type="chain" id="PRO_0000076453" description="Nuclear factor erythroid 2-related factor 3">
    <location>
        <begin position="1"/>
        <end position="660"/>
    </location>
</feature>
<feature type="domain" description="bZIP" evidence="2">
    <location>
        <begin position="541"/>
        <end position="604"/>
    </location>
</feature>
<feature type="region of interest" description="Disordered" evidence="3">
    <location>
        <begin position="120"/>
        <end position="214"/>
    </location>
</feature>
<feature type="region of interest" description="Basic motif" evidence="2">
    <location>
        <begin position="543"/>
        <end position="562"/>
    </location>
</feature>
<feature type="region of interest" description="Leucine-zipper" evidence="2">
    <location>
        <begin position="566"/>
        <end position="573"/>
    </location>
</feature>
<feature type="compositionally biased region" description="Gly residues" evidence="3">
    <location>
        <begin position="123"/>
        <end position="135"/>
    </location>
</feature>
<feature type="compositionally biased region" description="Basic and acidic residues" evidence="3">
    <location>
        <begin position="173"/>
        <end position="186"/>
    </location>
</feature>
<feature type="compositionally biased region" description="Basic and acidic residues" evidence="3">
    <location>
        <begin position="204"/>
        <end position="214"/>
    </location>
</feature>
<accession>Q9WTM4</accession>
<dbReference type="EMBL" id="AB013852">
    <property type="protein sequence ID" value="BAA76289.1"/>
    <property type="molecule type" value="mRNA"/>
</dbReference>
<dbReference type="EMBL" id="BC005416">
    <property type="protein sequence ID" value="AAH05416.1"/>
    <property type="molecule type" value="mRNA"/>
</dbReference>
<dbReference type="CCDS" id="CCDS20134.1"/>
<dbReference type="RefSeq" id="NP_035033.1">
    <property type="nucleotide sequence ID" value="NM_010903.2"/>
</dbReference>
<dbReference type="SMR" id="Q9WTM4"/>
<dbReference type="FunCoup" id="Q9WTM4">
    <property type="interactions" value="754"/>
</dbReference>
<dbReference type="STRING" id="10090.ENSMUSP00000005103"/>
<dbReference type="GlyGen" id="Q9WTM4">
    <property type="glycosylation" value="1 site"/>
</dbReference>
<dbReference type="PhosphoSitePlus" id="Q9WTM4"/>
<dbReference type="PaxDb" id="10090-ENSMUSP00000005103"/>
<dbReference type="ProteomicsDB" id="293651"/>
<dbReference type="Antibodypedia" id="12307">
    <property type="antibodies" value="174 antibodies from 28 providers"/>
</dbReference>
<dbReference type="DNASU" id="18025"/>
<dbReference type="Ensembl" id="ENSMUST00000005103.12">
    <property type="protein sequence ID" value="ENSMUSP00000005103.6"/>
    <property type="gene ID" value="ENSMUSG00000029832.17"/>
</dbReference>
<dbReference type="GeneID" id="18025"/>
<dbReference type="KEGG" id="mmu:18025"/>
<dbReference type="UCSC" id="uc009bxl.1">
    <property type="organism name" value="mouse"/>
</dbReference>
<dbReference type="AGR" id="MGI:1339958"/>
<dbReference type="CTD" id="9603"/>
<dbReference type="MGI" id="MGI:1339958">
    <property type="gene designation" value="Nfe2l3"/>
</dbReference>
<dbReference type="VEuPathDB" id="HostDB:ENSMUSG00000029832"/>
<dbReference type="eggNOG" id="KOG3863">
    <property type="taxonomic scope" value="Eukaryota"/>
</dbReference>
<dbReference type="GeneTree" id="ENSGT00950000182892"/>
<dbReference type="HOGENOM" id="CLU_024173_1_0_1"/>
<dbReference type="InParanoid" id="Q9WTM4"/>
<dbReference type="OMA" id="CNLQARK"/>
<dbReference type="OrthoDB" id="7458135at2759"/>
<dbReference type="PhylomeDB" id="Q9WTM4"/>
<dbReference type="TreeFam" id="TF337360"/>
<dbReference type="BioGRID-ORCS" id="18025">
    <property type="hits" value="5 hits in 81 CRISPR screens"/>
</dbReference>
<dbReference type="ChiTaRS" id="Nfe2l3">
    <property type="organism name" value="mouse"/>
</dbReference>
<dbReference type="PRO" id="PR:Q9WTM4"/>
<dbReference type="Proteomes" id="UP000000589">
    <property type="component" value="Chromosome 6"/>
</dbReference>
<dbReference type="RNAct" id="Q9WTM4">
    <property type="molecule type" value="protein"/>
</dbReference>
<dbReference type="Bgee" id="ENSMUSG00000029832">
    <property type="expression patterns" value="Expressed in urinary bladder urothelium and 155 other cell types or tissues"/>
</dbReference>
<dbReference type="ExpressionAtlas" id="Q9WTM4">
    <property type="expression patterns" value="baseline and differential"/>
</dbReference>
<dbReference type="GO" id="GO:0090575">
    <property type="term" value="C:RNA polymerase II transcription regulator complex"/>
    <property type="evidence" value="ECO:0007669"/>
    <property type="project" value="Ensembl"/>
</dbReference>
<dbReference type="GO" id="GO:0001227">
    <property type="term" value="F:DNA-binding transcription repressor activity, RNA polymerase II-specific"/>
    <property type="evidence" value="ECO:0000314"/>
    <property type="project" value="NTNU_SB"/>
</dbReference>
<dbReference type="GO" id="GO:0000978">
    <property type="term" value="F:RNA polymerase II cis-regulatory region sequence-specific DNA binding"/>
    <property type="evidence" value="ECO:0000315"/>
    <property type="project" value="NTNU_SB"/>
</dbReference>
<dbReference type="GO" id="GO:0000122">
    <property type="term" value="P:negative regulation of transcription by RNA polymerase II"/>
    <property type="evidence" value="ECO:0000314"/>
    <property type="project" value="NTNU_SB"/>
</dbReference>
<dbReference type="CDD" id="cd14720">
    <property type="entry name" value="bZIP_NFE2-like"/>
    <property type="match status" value="1"/>
</dbReference>
<dbReference type="FunFam" id="1.10.880.10:FF:000003">
    <property type="entry name" value="Nuclear factor, erythroid 2 like 3"/>
    <property type="match status" value="1"/>
</dbReference>
<dbReference type="Gene3D" id="1.10.880.10">
    <property type="entry name" value="Transcription factor, Skn-1-like, DNA-binding domain"/>
    <property type="match status" value="1"/>
</dbReference>
<dbReference type="InterPro" id="IPR004827">
    <property type="entry name" value="bZIP"/>
</dbReference>
<dbReference type="InterPro" id="IPR004826">
    <property type="entry name" value="bZIP_Maf"/>
</dbReference>
<dbReference type="InterPro" id="IPR046347">
    <property type="entry name" value="bZIP_sf"/>
</dbReference>
<dbReference type="InterPro" id="IPR047167">
    <property type="entry name" value="NFE2-like"/>
</dbReference>
<dbReference type="InterPro" id="IPR008917">
    <property type="entry name" value="TF_DNA-bd_sf"/>
</dbReference>
<dbReference type="PANTHER" id="PTHR24411">
    <property type="entry name" value="NUCLEAR FACTOR ERYTHROID 2-RELATED FACTOR"/>
    <property type="match status" value="1"/>
</dbReference>
<dbReference type="PANTHER" id="PTHR24411:SF8">
    <property type="entry name" value="NUCLEAR FACTOR ERYTHROID 2-RELATED FACTOR 3"/>
    <property type="match status" value="1"/>
</dbReference>
<dbReference type="Pfam" id="PF03131">
    <property type="entry name" value="bZIP_Maf"/>
    <property type="match status" value="1"/>
</dbReference>
<dbReference type="SMART" id="SM00338">
    <property type="entry name" value="BRLZ"/>
    <property type="match status" value="1"/>
</dbReference>
<dbReference type="SUPFAM" id="SSF47454">
    <property type="entry name" value="A DNA-binding domain in eukaryotic transcription factors"/>
    <property type="match status" value="1"/>
</dbReference>
<dbReference type="SUPFAM" id="SSF57959">
    <property type="entry name" value="Leucine zipper domain"/>
    <property type="match status" value="1"/>
</dbReference>
<dbReference type="PROSITE" id="PS50217">
    <property type="entry name" value="BZIP"/>
    <property type="match status" value="1"/>
</dbReference>
<dbReference type="PROSITE" id="PS00036">
    <property type="entry name" value="BZIP_BASIC"/>
    <property type="match status" value="1"/>
</dbReference>
<reference key="1">
    <citation type="journal article" date="1999" name="J. Biol. Chem.">
        <title>Molecular cloning and functional characterization of a new Cap'n' collar family transcription factor Nrf3.</title>
        <authorList>
            <person name="Kobayashi A."/>
            <person name="Ito E."/>
            <person name="Toki T."/>
            <person name="Kogame K."/>
            <person name="Takahashi S."/>
            <person name="Igarashi K."/>
            <person name="Hayashi N."/>
            <person name="Yamamoto M."/>
        </authorList>
    </citation>
    <scope>NUCLEOTIDE SEQUENCE [MRNA]</scope>
    <scope>CHARACTERIZATION</scope>
    <source>
        <strain>ICR</strain>
        <tissue>Brain</tissue>
    </source>
</reference>
<reference key="2">
    <citation type="journal article" date="2004" name="Genome Res.">
        <title>The status, quality, and expansion of the NIH full-length cDNA project: the Mammalian Gene Collection (MGC).</title>
        <authorList>
            <consortium name="The MGC Project Team"/>
        </authorList>
    </citation>
    <scope>NUCLEOTIDE SEQUENCE [LARGE SCALE MRNA]</scope>
    <source>
        <strain>FVB/N</strain>
        <tissue>Mammary tumor</tissue>
    </source>
</reference>
<reference key="3">
    <citation type="journal article" date="2004" name="Mol. Cell. Biol.">
        <title>Complexity of CNC transcription factors as revealed by gene targeting of the Nrf3 locus.</title>
        <authorList>
            <person name="Derjuga A."/>
            <person name="Gourley T.S."/>
            <person name="Holm T.M."/>
            <person name="Heng H.H.Q."/>
            <person name="Shivdasani R.A."/>
            <person name="Ahmed R."/>
            <person name="Andrews N.C."/>
            <person name="Blank V."/>
        </authorList>
    </citation>
    <scope>TISSUE SPECIFICITY</scope>
</reference>
<evidence type="ECO:0000250" key="1"/>
<evidence type="ECO:0000255" key="2">
    <source>
        <dbReference type="PROSITE-ProRule" id="PRU00978"/>
    </source>
</evidence>
<evidence type="ECO:0000256" key="3">
    <source>
        <dbReference type="SAM" id="MobiDB-lite"/>
    </source>
</evidence>
<evidence type="ECO:0000269" key="4">
    <source>
    </source>
</evidence>
<evidence type="ECO:0000305" key="5"/>
<protein>
    <recommendedName>
        <fullName>Nuclear factor erythroid 2-related factor 3</fullName>
        <shortName>NF-E2-related factor 3</shortName>
        <shortName>NFE2-related factor 3</shortName>
    </recommendedName>
    <alternativeName>
        <fullName>Nuclear factor, erythroid derived 2, like 3</fullName>
    </alternativeName>
</protein>